<gene>
    <name evidence="1" type="primary">bioD1</name>
    <name type="ordered locus">STY0830</name>
    <name type="ordered locus">t2090</name>
</gene>
<reference key="1">
    <citation type="journal article" date="2001" name="Nature">
        <title>Complete genome sequence of a multiple drug resistant Salmonella enterica serovar Typhi CT18.</title>
        <authorList>
            <person name="Parkhill J."/>
            <person name="Dougan G."/>
            <person name="James K.D."/>
            <person name="Thomson N.R."/>
            <person name="Pickard D."/>
            <person name="Wain J."/>
            <person name="Churcher C.M."/>
            <person name="Mungall K.L."/>
            <person name="Bentley S.D."/>
            <person name="Holden M.T.G."/>
            <person name="Sebaihia M."/>
            <person name="Baker S."/>
            <person name="Basham D."/>
            <person name="Brooks K."/>
            <person name="Chillingworth T."/>
            <person name="Connerton P."/>
            <person name="Cronin A."/>
            <person name="Davis P."/>
            <person name="Davies R.M."/>
            <person name="Dowd L."/>
            <person name="White N."/>
            <person name="Farrar J."/>
            <person name="Feltwell T."/>
            <person name="Hamlin N."/>
            <person name="Haque A."/>
            <person name="Hien T.T."/>
            <person name="Holroyd S."/>
            <person name="Jagels K."/>
            <person name="Krogh A."/>
            <person name="Larsen T.S."/>
            <person name="Leather S."/>
            <person name="Moule S."/>
            <person name="O'Gaora P."/>
            <person name="Parry C."/>
            <person name="Quail M.A."/>
            <person name="Rutherford K.M."/>
            <person name="Simmonds M."/>
            <person name="Skelton J."/>
            <person name="Stevens K."/>
            <person name="Whitehead S."/>
            <person name="Barrell B.G."/>
        </authorList>
    </citation>
    <scope>NUCLEOTIDE SEQUENCE [LARGE SCALE GENOMIC DNA]</scope>
    <source>
        <strain>CT18</strain>
    </source>
</reference>
<reference key="2">
    <citation type="journal article" date="2003" name="J. Bacteriol.">
        <title>Comparative genomics of Salmonella enterica serovar Typhi strains Ty2 and CT18.</title>
        <authorList>
            <person name="Deng W."/>
            <person name="Liou S.-R."/>
            <person name="Plunkett G. III"/>
            <person name="Mayhew G.F."/>
            <person name="Rose D.J."/>
            <person name="Burland V."/>
            <person name="Kodoyianni V."/>
            <person name="Schwartz D.C."/>
            <person name="Blattner F.R."/>
        </authorList>
    </citation>
    <scope>NUCLEOTIDE SEQUENCE [LARGE SCALE GENOMIC DNA]</scope>
    <source>
        <strain>ATCC 700931 / Ty2</strain>
    </source>
</reference>
<keyword id="KW-0067">ATP-binding</keyword>
<keyword id="KW-0093">Biotin biosynthesis</keyword>
<keyword id="KW-0963">Cytoplasm</keyword>
<keyword id="KW-0436">Ligase</keyword>
<keyword id="KW-0460">Magnesium</keyword>
<keyword id="KW-0479">Metal-binding</keyword>
<keyword id="KW-0547">Nucleotide-binding</keyword>
<organism>
    <name type="scientific">Salmonella typhi</name>
    <dbReference type="NCBI Taxonomy" id="90370"/>
    <lineage>
        <taxon>Bacteria</taxon>
        <taxon>Pseudomonadati</taxon>
        <taxon>Pseudomonadota</taxon>
        <taxon>Gammaproteobacteria</taxon>
        <taxon>Enterobacterales</taxon>
        <taxon>Enterobacteriaceae</taxon>
        <taxon>Salmonella</taxon>
    </lineage>
</organism>
<comment type="function">
    <text evidence="1">Catalyzes a mechanistically unusual reaction, the ATP-dependent insertion of CO2 between the N7 and N8 nitrogen atoms of 7,8-diaminopelargonic acid (DAPA, also called 7,8-diammoniononanoate) to form a ureido ring.</text>
</comment>
<comment type="catalytic activity">
    <reaction evidence="1">
        <text>(7R,8S)-7,8-diammoniononanoate + CO2 + ATP = (4R,5S)-dethiobiotin + ADP + phosphate + 3 H(+)</text>
        <dbReference type="Rhea" id="RHEA:15805"/>
        <dbReference type="ChEBI" id="CHEBI:15378"/>
        <dbReference type="ChEBI" id="CHEBI:16526"/>
        <dbReference type="ChEBI" id="CHEBI:30616"/>
        <dbReference type="ChEBI" id="CHEBI:43474"/>
        <dbReference type="ChEBI" id="CHEBI:149469"/>
        <dbReference type="ChEBI" id="CHEBI:149473"/>
        <dbReference type="ChEBI" id="CHEBI:456216"/>
        <dbReference type="EC" id="6.3.3.3"/>
    </reaction>
</comment>
<comment type="cofactor">
    <cofactor evidence="1">
        <name>Mg(2+)</name>
        <dbReference type="ChEBI" id="CHEBI:18420"/>
    </cofactor>
</comment>
<comment type="pathway">
    <text evidence="1">Cofactor biosynthesis; biotin biosynthesis; biotin from 7,8-diaminononanoate: step 1/2.</text>
</comment>
<comment type="subunit">
    <text evidence="1">Homodimer.</text>
</comment>
<comment type="subcellular location">
    <subcellularLocation>
        <location evidence="1">Cytoplasm</location>
    </subcellularLocation>
</comment>
<comment type="similarity">
    <text evidence="1">Belongs to the dethiobiotin synthetase family.</text>
</comment>
<evidence type="ECO:0000255" key="1">
    <source>
        <dbReference type="HAMAP-Rule" id="MF_00336"/>
    </source>
</evidence>
<protein>
    <recommendedName>
        <fullName evidence="1">ATP-dependent dethiobiotin synthetase BioD 1</fullName>
        <ecNumber evidence="1">6.3.3.3</ecNumber>
    </recommendedName>
    <alternativeName>
        <fullName evidence="1">DTB synthetase 1</fullName>
        <shortName evidence="1">DTBS 1</shortName>
    </alternativeName>
    <alternativeName>
        <fullName evidence="1">Dethiobiotin synthase 1</fullName>
    </alternativeName>
</protein>
<sequence length="228" mass="24190">MTKRYFVTGTDTEVGKTVASCALLQAATQLGYQTVGYKPVASGSEMTTDGLRNSDALALQRNSSLPQPYSAINPYTFAEPTSPHIASADEGRAIDAAVLSRGLRTLEAQADWVLTEGAGGWFTPLSATLTFADWVQTEQLPVILVVGVKLGCINHAMLTALAVEQAGLPLVGWIANDMQPPGARHGEYLATLRRVIPAPLLGEIPWLGVSPSQAATGQYLDLSPLERA</sequence>
<dbReference type="EC" id="6.3.3.3" evidence="1"/>
<dbReference type="EMBL" id="AL513382">
    <property type="protein sequence ID" value="CAD05245.1"/>
    <property type="molecule type" value="Genomic_DNA"/>
</dbReference>
<dbReference type="EMBL" id="AE014613">
    <property type="protein sequence ID" value="AAO69707.1"/>
    <property type="molecule type" value="Genomic_DNA"/>
</dbReference>
<dbReference type="RefSeq" id="NP_455339.1">
    <property type="nucleotide sequence ID" value="NC_003198.1"/>
</dbReference>
<dbReference type="SMR" id="Q8Z890"/>
<dbReference type="STRING" id="220341.gene:17584835"/>
<dbReference type="KEGG" id="stt:t2090"/>
<dbReference type="KEGG" id="sty:STY0830"/>
<dbReference type="PATRIC" id="fig|220341.7.peg.834"/>
<dbReference type="eggNOG" id="COG0132">
    <property type="taxonomic scope" value="Bacteria"/>
</dbReference>
<dbReference type="HOGENOM" id="CLU_072551_0_0_6"/>
<dbReference type="OMA" id="NPIVIFQ"/>
<dbReference type="OrthoDB" id="9802097at2"/>
<dbReference type="UniPathway" id="UPA00078">
    <property type="reaction ID" value="UER00161"/>
</dbReference>
<dbReference type="Proteomes" id="UP000000541">
    <property type="component" value="Chromosome"/>
</dbReference>
<dbReference type="Proteomes" id="UP000002670">
    <property type="component" value="Chromosome"/>
</dbReference>
<dbReference type="GO" id="GO:0005829">
    <property type="term" value="C:cytosol"/>
    <property type="evidence" value="ECO:0007669"/>
    <property type="project" value="TreeGrafter"/>
</dbReference>
<dbReference type="GO" id="GO:0005524">
    <property type="term" value="F:ATP binding"/>
    <property type="evidence" value="ECO:0007669"/>
    <property type="project" value="UniProtKB-UniRule"/>
</dbReference>
<dbReference type="GO" id="GO:0004141">
    <property type="term" value="F:dethiobiotin synthase activity"/>
    <property type="evidence" value="ECO:0007669"/>
    <property type="project" value="UniProtKB-UniRule"/>
</dbReference>
<dbReference type="GO" id="GO:0000287">
    <property type="term" value="F:magnesium ion binding"/>
    <property type="evidence" value="ECO:0007669"/>
    <property type="project" value="UniProtKB-UniRule"/>
</dbReference>
<dbReference type="GO" id="GO:0009102">
    <property type="term" value="P:biotin biosynthetic process"/>
    <property type="evidence" value="ECO:0007669"/>
    <property type="project" value="UniProtKB-UniRule"/>
</dbReference>
<dbReference type="CDD" id="cd03109">
    <property type="entry name" value="DTBS"/>
    <property type="match status" value="1"/>
</dbReference>
<dbReference type="FunFam" id="3.40.50.300:FF:000292">
    <property type="entry name" value="ATP-dependent dethiobiotin synthetase BioD"/>
    <property type="match status" value="1"/>
</dbReference>
<dbReference type="Gene3D" id="3.40.50.300">
    <property type="entry name" value="P-loop containing nucleotide triphosphate hydrolases"/>
    <property type="match status" value="1"/>
</dbReference>
<dbReference type="HAMAP" id="MF_00336">
    <property type="entry name" value="BioD"/>
    <property type="match status" value="1"/>
</dbReference>
<dbReference type="InterPro" id="IPR004472">
    <property type="entry name" value="DTB_synth_BioD"/>
</dbReference>
<dbReference type="InterPro" id="IPR027417">
    <property type="entry name" value="P-loop_NTPase"/>
</dbReference>
<dbReference type="NCBIfam" id="TIGR00347">
    <property type="entry name" value="bioD"/>
    <property type="match status" value="1"/>
</dbReference>
<dbReference type="PANTHER" id="PTHR43210">
    <property type="entry name" value="DETHIOBIOTIN SYNTHETASE"/>
    <property type="match status" value="1"/>
</dbReference>
<dbReference type="PANTHER" id="PTHR43210:SF5">
    <property type="entry name" value="DETHIOBIOTIN SYNTHETASE"/>
    <property type="match status" value="1"/>
</dbReference>
<dbReference type="Pfam" id="PF13500">
    <property type="entry name" value="AAA_26"/>
    <property type="match status" value="1"/>
</dbReference>
<dbReference type="PIRSF" id="PIRSF006755">
    <property type="entry name" value="DTB_synth"/>
    <property type="match status" value="1"/>
</dbReference>
<dbReference type="SUPFAM" id="SSF52540">
    <property type="entry name" value="P-loop containing nucleoside triphosphate hydrolases"/>
    <property type="match status" value="1"/>
</dbReference>
<feature type="chain" id="PRO_0000187984" description="ATP-dependent dethiobiotin synthetase BioD 1">
    <location>
        <begin position="1"/>
        <end position="228"/>
    </location>
</feature>
<feature type="active site" evidence="1">
    <location>
        <position position="38"/>
    </location>
</feature>
<feature type="binding site" evidence="1">
    <location>
        <begin position="13"/>
        <end position="18"/>
    </location>
    <ligand>
        <name>ATP</name>
        <dbReference type="ChEBI" id="CHEBI:30616"/>
    </ligand>
</feature>
<feature type="binding site" evidence="1">
    <location>
        <position position="17"/>
    </location>
    <ligand>
        <name>Mg(2+)</name>
        <dbReference type="ChEBI" id="CHEBI:18420"/>
    </ligand>
</feature>
<feature type="binding site" evidence="1">
    <location>
        <position position="42"/>
    </location>
    <ligand>
        <name>substrate</name>
    </ligand>
</feature>
<feature type="binding site" evidence="1">
    <location>
        <position position="55"/>
    </location>
    <ligand>
        <name>ATP</name>
        <dbReference type="ChEBI" id="CHEBI:30616"/>
    </ligand>
</feature>
<feature type="binding site" evidence="1">
    <location>
        <position position="55"/>
    </location>
    <ligand>
        <name>Mg(2+)</name>
        <dbReference type="ChEBI" id="CHEBI:18420"/>
    </ligand>
</feature>
<feature type="binding site" evidence="1">
    <location>
        <begin position="116"/>
        <end position="119"/>
    </location>
    <ligand>
        <name>ATP</name>
        <dbReference type="ChEBI" id="CHEBI:30616"/>
    </ligand>
</feature>
<feature type="binding site" evidence="1">
    <location>
        <position position="116"/>
    </location>
    <ligand>
        <name>Mg(2+)</name>
        <dbReference type="ChEBI" id="CHEBI:18420"/>
    </ligand>
</feature>
<feature type="binding site" evidence="1">
    <location>
        <begin position="176"/>
        <end position="177"/>
    </location>
    <ligand>
        <name>ATP</name>
        <dbReference type="ChEBI" id="CHEBI:30616"/>
    </ligand>
</feature>
<feature type="binding site" evidence="1">
    <location>
        <begin position="205"/>
        <end position="207"/>
    </location>
    <ligand>
        <name>ATP</name>
        <dbReference type="ChEBI" id="CHEBI:30616"/>
    </ligand>
</feature>
<proteinExistence type="inferred from homology"/>
<name>BIOD1_SALTI</name>
<accession>Q8Z890</accession>